<reference key="1">
    <citation type="journal article" date="2008" name="J. Bacteriol.">
        <title>Genome sequence of a nephritogenic and highly transformable M49 strain of Streptococcus pyogenes.</title>
        <authorList>
            <person name="McShan W.M."/>
            <person name="Ferretti J.J."/>
            <person name="Karasawa T."/>
            <person name="Suvorov A.N."/>
            <person name="Lin S."/>
            <person name="Qin B."/>
            <person name="Jia H."/>
            <person name="Kenton S."/>
            <person name="Najar F."/>
            <person name="Wu H."/>
            <person name="Scott J."/>
            <person name="Roe B.A."/>
            <person name="Savic D.J."/>
        </authorList>
    </citation>
    <scope>NUCLEOTIDE SEQUENCE [LARGE SCALE GENOMIC DNA]</scope>
    <source>
        <strain>NZ131</strain>
    </source>
</reference>
<evidence type="ECO:0000255" key="1">
    <source>
        <dbReference type="HAMAP-Rule" id="MF_00080"/>
    </source>
</evidence>
<dbReference type="EMBL" id="CP000829">
    <property type="protein sequence ID" value="ACI60950.1"/>
    <property type="molecule type" value="Genomic_DNA"/>
</dbReference>
<dbReference type="SMR" id="B5XKT8"/>
<dbReference type="KEGG" id="soz:Spy49_0629"/>
<dbReference type="HOGENOM" id="CLU_054919_3_2_9"/>
<dbReference type="Proteomes" id="UP000001039">
    <property type="component" value="Chromosome"/>
</dbReference>
<dbReference type="GO" id="GO:0005829">
    <property type="term" value="C:cytosol"/>
    <property type="evidence" value="ECO:0007669"/>
    <property type="project" value="TreeGrafter"/>
</dbReference>
<dbReference type="GO" id="GO:0016020">
    <property type="term" value="C:membrane"/>
    <property type="evidence" value="ECO:0007669"/>
    <property type="project" value="TreeGrafter"/>
</dbReference>
<dbReference type="GO" id="GO:0043022">
    <property type="term" value="F:ribosome binding"/>
    <property type="evidence" value="ECO:0007669"/>
    <property type="project" value="TreeGrafter"/>
</dbReference>
<dbReference type="GO" id="GO:0003743">
    <property type="term" value="F:translation initiation factor activity"/>
    <property type="evidence" value="ECO:0007669"/>
    <property type="project" value="UniProtKB-UniRule"/>
</dbReference>
<dbReference type="GO" id="GO:0032790">
    <property type="term" value="P:ribosome disassembly"/>
    <property type="evidence" value="ECO:0007669"/>
    <property type="project" value="TreeGrafter"/>
</dbReference>
<dbReference type="FunFam" id="3.10.20.80:FF:000001">
    <property type="entry name" value="Translation initiation factor IF-3"/>
    <property type="match status" value="1"/>
</dbReference>
<dbReference type="FunFam" id="3.30.110.10:FF:000001">
    <property type="entry name" value="Translation initiation factor IF-3"/>
    <property type="match status" value="1"/>
</dbReference>
<dbReference type="Gene3D" id="3.30.110.10">
    <property type="entry name" value="Translation initiation factor 3 (IF-3), C-terminal domain"/>
    <property type="match status" value="1"/>
</dbReference>
<dbReference type="Gene3D" id="3.10.20.80">
    <property type="entry name" value="Translation initiation factor 3 (IF-3), N-terminal domain"/>
    <property type="match status" value="1"/>
</dbReference>
<dbReference type="HAMAP" id="MF_00080">
    <property type="entry name" value="IF_3"/>
    <property type="match status" value="1"/>
</dbReference>
<dbReference type="InterPro" id="IPR036788">
    <property type="entry name" value="T_IF-3_C_sf"/>
</dbReference>
<dbReference type="InterPro" id="IPR036787">
    <property type="entry name" value="T_IF-3_N_sf"/>
</dbReference>
<dbReference type="InterPro" id="IPR019813">
    <property type="entry name" value="Translation_initiation_fac3_CS"/>
</dbReference>
<dbReference type="InterPro" id="IPR001288">
    <property type="entry name" value="Translation_initiation_fac_3"/>
</dbReference>
<dbReference type="InterPro" id="IPR019815">
    <property type="entry name" value="Translation_initiation_fac_3_C"/>
</dbReference>
<dbReference type="InterPro" id="IPR019814">
    <property type="entry name" value="Translation_initiation_fac_3_N"/>
</dbReference>
<dbReference type="NCBIfam" id="TIGR00168">
    <property type="entry name" value="infC"/>
    <property type="match status" value="1"/>
</dbReference>
<dbReference type="PANTHER" id="PTHR10938">
    <property type="entry name" value="TRANSLATION INITIATION FACTOR IF-3"/>
    <property type="match status" value="1"/>
</dbReference>
<dbReference type="PANTHER" id="PTHR10938:SF0">
    <property type="entry name" value="TRANSLATION INITIATION FACTOR IF-3, MITOCHONDRIAL"/>
    <property type="match status" value="1"/>
</dbReference>
<dbReference type="Pfam" id="PF00707">
    <property type="entry name" value="IF3_C"/>
    <property type="match status" value="1"/>
</dbReference>
<dbReference type="Pfam" id="PF05198">
    <property type="entry name" value="IF3_N"/>
    <property type="match status" value="1"/>
</dbReference>
<dbReference type="SUPFAM" id="SSF55200">
    <property type="entry name" value="Translation initiation factor IF3, C-terminal domain"/>
    <property type="match status" value="1"/>
</dbReference>
<dbReference type="SUPFAM" id="SSF54364">
    <property type="entry name" value="Translation initiation factor IF3, N-terminal domain"/>
    <property type="match status" value="1"/>
</dbReference>
<dbReference type="PROSITE" id="PS00938">
    <property type="entry name" value="IF3"/>
    <property type="match status" value="1"/>
</dbReference>
<proteinExistence type="inferred from homology"/>
<keyword id="KW-0963">Cytoplasm</keyword>
<keyword id="KW-0396">Initiation factor</keyword>
<keyword id="KW-0648">Protein biosynthesis</keyword>
<accession>B5XKT8</accession>
<name>IF3_STRPZ</name>
<organism>
    <name type="scientific">Streptococcus pyogenes serotype M49 (strain NZ131)</name>
    <dbReference type="NCBI Taxonomy" id="471876"/>
    <lineage>
        <taxon>Bacteria</taxon>
        <taxon>Bacillati</taxon>
        <taxon>Bacillota</taxon>
        <taxon>Bacilli</taxon>
        <taxon>Lactobacillales</taxon>
        <taxon>Streptococcaceae</taxon>
        <taxon>Streptococcus</taxon>
    </lineage>
</organism>
<comment type="function">
    <text evidence="1">IF-3 binds to the 30S ribosomal subunit and shifts the equilibrium between 70S ribosomes and their 50S and 30S subunits in favor of the free subunits, thus enhancing the availability of 30S subunits on which protein synthesis initiation begins.</text>
</comment>
<comment type="subunit">
    <text evidence="1">Monomer.</text>
</comment>
<comment type="subcellular location">
    <subcellularLocation>
        <location evidence="1">Cytoplasm</location>
    </subcellularLocation>
</comment>
<comment type="similarity">
    <text evidence="1">Belongs to the IF-3 family.</text>
</comment>
<sequence length="176" mass="20054">MKIIAKKDLFINDEIRVREVRLVGLEGEQLGIKPLSEAQSLADASNVDLVLIQPQAVPPVAKLMDYGKFKFEYQKKQKEQRKKQSVVTVKEVRLSPVIDKGDFETKLRNGRKFLEKGNKVKVSIRFKGRMITHKEIGAKVLADFAEATQDIAIIEQRAKMDGRQMFMQLAPISDKK</sequence>
<gene>
    <name evidence="1" type="primary">infC</name>
    <name type="ordered locus">Spy49_0629</name>
</gene>
<feature type="chain" id="PRO_1000092787" description="Translation initiation factor IF-3">
    <location>
        <begin position="1"/>
        <end position="176"/>
    </location>
</feature>
<protein>
    <recommendedName>
        <fullName evidence="1">Translation initiation factor IF-3</fullName>
    </recommendedName>
</protein>